<proteinExistence type="inferred from homology"/>
<protein>
    <recommendedName>
        <fullName evidence="1">Cyanate hydratase</fullName>
        <shortName evidence="1">Cyanase</shortName>
        <ecNumber evidence="1">4.2.1.104</ecNumber>
    </recommendedName>
    <alternativeName>
        <fullName evidence="1">Cyanate hydrolase</fullName>
    </alternativeName>
    <alternativeName>
        <fullName evidence="1">Cyanate lyase</fullName>
    </alternativeName>
</protein>
<accession>B1Z5U9</accession>
<reference key="1">
    <citation type="submission" date="2008-04" db="EMBL/GenBank/DDBJ databases">
        <title>Complete sequence of chromosome 3 of Burkholderia ambifaria MC40-6.</title>
        <authorList>
            <person name="Copeland A."/>
            <person name="Lucas S."/>
            <person name="Lapidus A."/>
            <person name="Glavina del Rio T."/>
            <person name="Dalin E."/>
            <person name="Tice H."/>
            <person name="Pitluck S."/>
            <person name="Chain P."/>
            <person name="Malfatti S."/>
            <person name="Shin M."/>
            <person name="Vergez L."/>
            <person name="Lang D."/>
            <person name="Schmutz J."/>
            <person name="Larimer F."/>
            <person name="Land M."/>
            <person name="Hauser L."/>
            <person name="Kyrpides N."/>
            <person name="Lykidis A."/>
            <person name="Ramette A."/>
            <person name="Konstantinidis K."/>
            <person name="Tiedje J."/>
            <person name="Richardson P."/>
        </authorList>
    </citation>
    <scope>NUCLEOTIDE SEQUENCE [LARGE SCALE GENOMIC DNA]</scope>
    <source>
        <strain>MC40-6</strain>
    </source>
</reference>
<feature type="chain" id="PRO_1000128220" description="Cyanate hydratase">
    <location>
        <begin position="1"/>
        <end position="156"/>
    </location>
</feature>
<feature type="active site" evidence="1">
    <location>
        <position position="96"/>
    </location>
</feature>
<feature type="active site" evidence="1">
    <location>
        <position position="99"/>
    </location>
</feature>
<feature type="active site" evidence="1">
    <location>
        <position position="122"/>
    </location>
</feature>
<organism>
    <name type="scientific">Burkholderia ambifaria (strain MC40-6)</name>
    <dbReference type="NCBI Taxonomy" id="398577"/>
    <lineage>
        <taxon>Bacteria</taxon>
        <taxon>Pseudomonadati</taxon>
        <taxon>Pseudomonadota</taxon>
        <taxon>Betaproteobacteria</taxon>
        <taxon>Burkholderiales</taxon>
        <taxon>Burkholderiaceae</taxon>
        <taxon>Burkholderia</taxon>
        <taxon>Burkholderia cepacia complex</taxon>
    </lineage>
</organism>
<name>CYNS_BURA4</name>
<evidence type="ECO:0000255" key="1">
    <source>
        <dbReference type="HAMAP-Rule" id="MF_00535"/>
    </source>
</evidence>
<sequence length="156" mass="16893">MTQSQVTPNAREALTETIVDAKVRKNLTFEAINEGTGLSLAYTTAALLGQHALPEKAAKLVAERLGLDDDAVRLLQTIPVRGSIPGGVPTDPTVYRFYEMVQVYGSTLKALVHEKFGDGIISAINFKLDIQKVPDPEGGERAVITLNGKYLPTKPF</sequence>
<keyword id="KW-0456">Lyase</keyword>
<comment type="function">
    <text evidence="1">Catalyzes the reaction of cyanate with bicarbonate to produce ammonia and carbon dioxide.</text>
</comment>
<comment type="catalytic activity">
    <reaction evidence="1">
        <text>cyanate + hydrogencarbonate + 3 H(+) = NH4(+) + 2 CO2</text>
        <dbReference type="Rhea" id="RHEA:11120"/>
        <dbReference type="ChEBI" id="CHEBI:15378"/>
        <dbReference type="ChEBI" id="CHEBI:16526"/>
        <dbReference type="ChEBI" id="CHEBI:17544"/>
        <dbReference type="ChEBI" id="CHEBI:28938"/>
        <dbReference type="ChEBI" id="CHEBI:29195"/>
        <dbReference type="EC" id="4.2.1.104"/>
    </reaction>
</comment>
<comment type="similarity">
    <text evidence="1">Belongs to the cyanase family.</text>
</comment>
<gene>
    <name evidence="1" type="primary">cynS</name>
    <name type="ordered locus">BamMC406_5702</name>
</gene>
<dbReference type="EC" id="4.2.1.104" evidence="1"/>
<dbReference type="EMBL" id="CP001027">
    <property type="protein sequence ID" value="ACB68145.1"/>
    <property type="molecule type" value="Genomic_DNA"/>
</dbReference>
<dbReference type="RefSeq" id="WP_011660834.1">
    <property type="nucleotide sequence ID" value="NC_010557.1"/>
</dbReference>
<dbReference type="SMR" id="B1Z5U9"/>
<dbReference type="GeneID" id="93089255"/>
<dbReference type="KEGG" id="bac:BamMC406_5702"/>
<dbReference type="HOGENOM" id="CLU_103452_1_1_4"/>
<dbReference type="OrthoDB" id="9785870at2"/>
<dbReference type="Proteomes" id="UP000001680">
    <property type="component" value="Chromosome 3"/>
</dbReference>
<dbReference type="GO" id="GO:0008824">
    <property type="term" value="F:cyanate hydratase activity"/>
    <property type="evidence" value="ECO:0007669"/>
    <property type="project" value="UniProtKB-UniRule"/>
</dbReference>
<dbReference type="GO" id="GO:0003677">
    <property type="term" value="F:DNA binding"/>
    <property type="evidence" value="ECO:0007669"/>
    <property type="project" value="InterPro"/>
</dbReference>
<dbReference type="GO" id="GO:0009439">
    <property type="term" value="P:cyanate metabolic process"/>
    <property type="evidence" value="ECO:0007669"/>
    <property type="project" value="UniProtKB-UniRule"/>
</dbReference>
<dbReference type="CDD" id="cd00559">
    <property type="entry name" value="Cyanase_C"/>
    <property type="match status" value="1"/>
</dbReference>
<dbReference type="Gene3D" id="3.30.1160.10">
    <property type="entry name" value="Cyanate lyase, C-terminal domain"/>
    <property type="match status" value="1"/>
</dbReference>
<dbReference type="Gene3D" id="1.10.260.40">
    <property type="entry name" value="lambda repressor-like DNA-binding domains"/>
    <property type="match status" value="1"/>
</dbReference>
<dbReference type="HAMAP" id="MF_00535">
    <property type="entry name" value="Cyanate_hydrat"/>
    <property type="match status" value="1"/>
</dbReference>
<dbReference type="InterPro" id="IPR008076">
    <property type="entry name" value="Cyanase"/>
</dbReference>
<dbReference type="InterPro" id="IPR003712">
    <property type="entry name" value="Cyanate_lyase_C"/>
</dbReference>
<dbReference type="InterPro" id="IPR036581">
    <property type="entry name" value="Cyanate_lyase_C_sf"/>
</dbReference>
<dbReference type="InterPro" id="IPR048564">
    <property type="entry name" value="CYNS_N"/>
</dbReference>
<dbReference type="InterPro" id="IPR010982">
    <property type="entry name" value="Lambda_DNA-bd_dom_sf"/>
</dbReference>
<dbReference type="NCBIfam" id="TIGR00673">
    <property type="entry name" value="cynS"/>
    <property type="match status" value="1"/>
</dbReference>
<dbReference type="NCBIfam" id="NF002773">
    <property type="entry name" value="PRK02866.1"/>
    <property type="match status" value="1"/>
</dbReference>
<dbReference type="PANTHER" id="PTHR34186">
    <property type="entry name" value="CYANATE HYDRATASE"/>
    <property type="match status" value="1"/>
</dbReference>
<dbReference type="PANTHER" id="PTHR34186:SF2">
    <property type="entry name" value="CYANATE HYDRATASE"/>
    <property type="match status" value="1"/>
</dbReference>
<dbReference type="Pfam" id="PF02560">
    <property type="entry name" value="Cyanate_lyase"/>
    <property type="match status" value="1"/>
</dbReference>
<dbReference type="Pfam" id="PF21291">
    <property type="entry name" value="CYNS_N"/>
    <property type="match status" value="1"/>
</dbReference>
<dbReference type="PIRSF" id="PIRSF001263">
    <property type="entry name" value="Cyanate_hydratas"/>
    <property type="match status" value="1"/>
</dbReference>
<dbReference type="PRINTS" id="PR01693">
    <property type="entry name" value="CYANASE"/>
</dbReference>
<dbReference type="SMART" id="SM01116">
    <property type="entry name" value="Cyanate_lyase"/>
    <property type="match status" value="1"/>
</dbReference>
<dbReference type="SUPFAM" id="SSF55234">
    <property type="entry name" value="Cyanase C-terminal domain"/>
    <property type="match status" value="1"/>
</dbReference>
<dbReference type="SUPFAM" id="SSF47413">
    <property type="entry name" value="lambda repressor-like DNA-binding domains"/>
    <property type="match status" value="1"/>
</dbReference>